<organism evidence="15">
    <name type="scientific">Toxoplasma gondii (strain ATCC 50611 / Me49)</name>
    <dbReference type="NCBI Taxonomy" id="508771"/>
    <lineage>
        <taxon>Eukaryota</taxon>
        <taxon>Sar</taxon>
        <taxon>Alveolata</taxon>
        <taxon>Apicomplexa</taxon>
        <taxon>Conoidasida</taxon>
        <taxon>Coccidia</taxon>
        <taxon>Eucoccidiorida</taxon>
        <taxon>Eimeriorina</taxon>
        <taxon>Sarcocystidae</taxon>
        <taxon>Toxoplasma</taxon>
    </lineage>
</organism>
<reference evidence="15" key="1">
    <citation type="submission" date="2013-04" db="EMBL/GenBank/DDBJ databases">
        <authorList>
            <person name="Sibley D."/>
            <person name="Venepally P."/>
            <person name="Karamycheva S."/>
            <person name="Hadjithomas M."/>
            <person name="Khan A."/>
            <person name="Brunk B."/>
            <person name="Roos D."/>
            <person name="Caler E."/>
            <person name="Lorenzi H."/>
        </authorList>
    </citation>
    <scope>NUCLEOTIDE SEQUENCE [LARGE SCALE GENOMIC DNA]</scope>
    <source>
        <strain evidence="15">ATCC 50611 / Me49</strain>
    </source>
</reference>
<reference evidence="12" key="2">
    <citation type="journal article" date="2008" name="PLoS Pathog.">
        <title>Organizational changes of the daughter basal complex during the parasite replication of Toxoplasma gondii.</title>
        <authorList>
            <person name="Hu K."/>
        </authorList>
    </citation>
    <scope>SUBCELLULAR LOCATION</scope>
    <scope>DEVELOPMENTAL STAGE</scope>
    <source>
        <strain evidence="8">RH</strain>
    </source>
</reference>
<reference evidence="12" key="3">
    <citation type="journal article" date="2017" name="Nat. Commun.">
        <title>Myosin-dependent cell-cell communication controls synchronicity of division in acute and chronic stages of Toxoplasma gondii.</title>
        <authorList>
            <person name="Frenal K."/>
            <person name="Jacot D."/>
            <person name="Hammoudi P.M."/>
            <person name="Graindorge A."/>
            <person name="Maco B."/>
            <person name="Soldati-Favre D."/>
        </authorList>
    </citation>
    <scope>FUNCTION</scope>
    <scope>SUBCELLULAR LOCATION</scope>
    <scope>DEVELOPMENTAL STAGE</scope>
    <source>
        <strain evidence="9">RH</strain>
    </source>
</reference>
<reference evidence="12" key="4">
    <citation type="journal article" date="2019" name="J. Cell Sci.">
        <title>Centrin2 from the human parasite Toxoplasma gondii is required for its invasion and intracellular replication.</title>
        <authorList>
            <person name="Leung J.M."/>
            <person name="Liu J."/>
            <person name="Wetzel L.A."/>
            <person name="Hu K."/>
        </authorList>
    </citation>
    <scope>FUNCTION</scope>
    <scope>SUBCELLULAR LOCATION</scope>
    <scope>DEVELOPMENTAL STAGE</scope>
    <source>
        <strain evidence="10">RH</strain>
    </source>
</reference>
<reference evidence="12" key="5">
    <citation type="journal article" date="2019" name="Traffic">
        <title>The roles of Centrin 2 and Dynein Light Chain 8a in apical secretory organelles discharge of Toxoplasma gondii.</title>
        <authorList>
            <person name="Lentini G."/>
            <person name="Dubois D.J."/>
            <person name="Maco B."/>
            <person name="Soldati-Favre D."/>
            <person name="Frenal K."/>
        </authorList>
    </citation>
    <scope>FUNCTION</scope>
    <scope>SUBCELLULAR LOCATION</scope>
    <scope>DEVELOPMENTAL STAGE</scope>
    <source>
        <strain evidence="11">RH</strain>
    </source>
</reference>
<reference evidence="12" key="6">
    <citation type="journal article" date="2020" name="Biomolecules">
        <title>Distinct Calcium Binding and Structural Properties of Two Centrin Isoforms from Toxoplasma gondii.</title>
        <authorList>
            <person name="Bombardi L."/>
            <person name="Pedretti M."/>
            <person name="Conter C."/>
            <person name="Dominici P."/>
            <person name="Astegno A."/>
        </authorList>
    </citation>
    <scope>SUBUNIT</scope>
    <scope>DOMAIN</scope>
    <scope>MUTAGENESIS OF 2-GLN--GLY-22; GLY-44 AND GLY-153</scope>
</reference>
<protein>
    <recommendedName>
        <fullName evidence="8">Centrin-2</fullName>
        <shortName evidence="8">TgCEN2</shortName>
    </recommendedName>
</protein>
<proteinExistence type="evidence at protein level"/>
<feature type="chain" id="PRO_0000458050" description="Centrin-2">
    <location>
        <begin position="1"/>
        <end position="170"/>
    </location>
</feature>
<feature type="domain" description="EF-hand 1" evidence="1">
    <location>
        <begin position="26"/>
        <end position="61"/>
    </location>
</feature>
<feature type="domain" description="EF-hand 2" evidence="1">
    <location>
        <begin position="62"/>
        <end position="97"/>
    </location>
</feature>
<feature type="domain" description="EF-hand 3" evidence="1">
    <location>
        <begin position="99"/>
        <end position="134"/>
    </location>
</feature>
<feature type="domain" description="EF-hand 4" evidence="1">
    <location>
        <begin position="135"/>
        <end position="170"/>
    </location>
</feature>
<feature type="region of interest" description="Disordered" evidence="2">
    <location>
        <begin position="1"/>
        <end position="21"/>
    </location>
</feature>
<feature type="binding site" evidence="1 13">
    <location>
        <position position="39"/>
    </location>
    <ligand>
        <name>Ca(2+)</name>
        <dbReference type="ChEBI" id="CHEBI:29108"/>
        <note>low affinity</note>
    </ligand>
</feature>
<feature type="binding site" evidence="1 13">
    <location>
        <position position="41"/>
    </location>
    <ligand>
        <name>Ca(2+)</name>
        <dbReference type="ChEBI" id="CHEBI:29108"/>
        <note>low affinity</note>
    </ligand>
</feature>
<feature type="binding site" evidence="1 13">
    <location>
        <position position="43"/>
    </location>
    <ligand>
        <name>Ca(2+)</name>
        <dbReference type="ChEBI" id="CHEBI:29108"/>
        <note>low affinity</note>
    </ligand>
</feature>
<feature type="binding site" evidence="1 13">
    <location>
        <position position="45"/>
    </location>
    <ligand>
        <name>Ca(2+)</name>
        <dbReference type="ChEBI" id="CHEBI:29108"/>
        <note>low affinity</note>
    </ligand>
</feature>
<feature type="binding site" evidence="1 13">
    <location>
        <position position="50"/>
    </location>
    <ligand>
        <name>Ca(2+)</name>
        <dbReference type="ChEBI" id="CHEBI:29108"/>
        <note>low affinity</note>
    </ligand>
</feature>
<feature type="mutagenesis site" description="No effect on Ca(2+) binding. Abolishes Ca(2+) binding to EF-hand 1 domain; when associated with A-44. No effect on Ca(2+) binding; when associated with A-153." evidence="7">
    <location>
        <begin position="2"/>
        <end position="22"/>
    </location>
</feature>
<feature type="mutagenesis site" description="Abolishes Ca(2+) binding to EF-hand 1 domain; when associated with 2-GLN--GLY-22 DEL." evidence="7">
    <original>G</original>
    <variation>A</variation>
    <location>
        <position position="44"/>
    </location>
</feature>
<feature type="mutagenesis site" description="No effect on Ca(2+) binding; when associated with 2-GLN--GLY-22 DEL." evidence="7">
    <original>G</original>
    <variation>A</variation>
    <location>
        <position position="153"/>
    </location>
</feature>
<evidence type="ECO:0000255" key="1">
    <source>
        <dbReference type="PROSITE-ProRule" id="PRU00448"/>
    </source>
</evidence>
<evidence type="ECO:0000256" key="2">
    <source>
        <dbReference type="SAM" id="MobiDB-lite"/>
    </source>
</evidence>
<evidence type="ECO:0000269" key="3">
    <source>
    </source>
</evidence>
<evidence type="ECO:0000269" key="4">
    <source>
    </source>
</evidence>
<evidence type="ECO:0000269" key="5">
    <source>
    </source>
</evidence>
<evidence type="ECO:0000269" key="6">
    <source>
    </source>
</evidence>
<evidence type="ECO:0000269" key="7">
    <source>
    </source>
</evidence>
<evidence type="ECO:0000303" key="8">
    <source>
    </source>
</evidence>
<evidence type="ECO:0000303" key="9">
    <source>
    </source>
</evidence>
<evidence type="ECO:0000303" key="10">
    <source>
    </source>
</evidence>
<evidence type="ECO:0000303" key="11">
    <source>
    </source>
</evidence>
<evidence type="ECO:0000305" key="12"/>
<evidence type="ECO:0000305" key="13">
    <source>
    </source>
</evidence>
<evidence type="ECO:0000312" key="14">
    <source>
        <dbReference type="EMBL" id="EPT25169.1"/>
    </source>
</evidence>
<evidence type="ECO:0000312" key="15">
    <source>
        <dbReference type="Proteomes" id="UP000001529"/>
    </source>
</evidence>
<accession>A0A125YZN2</accession>
<dbReference type="EMBL" id="KE138840">
    <property type="protein sequence ID" value="EPT25169.1"/>
    <property type="molecule type" value="Genomic_DNA"/>
</dbReference>
<dbReference type="RefSeq" id="XP_018635066.1">
    <property type="nucleotide sequence ID" value="XM_018780928.1"/>
</dbReference>
<dbReference type="SMR" id="A0A125YZN2"/>
<dbReference type="EnsemblProtists" id="TGME49_250340-t26_1">
    <property type="protein sequence ID" value="TGME49_250340-t26_1"/>
    <property type="gene ID" value="TGME49_250340"/>
</dbReference>
<dbReference type="GeneID" id="7899254"/>
<dbReference type="KEGG" id="tgo:TGME49_250340"/>
<dbReference type="VEuPathDB" id="ToxoDB:TGME49_250340"/>
<dbReference type="OrthoDB" id="26525at2759"/>
<dbReference type="PhylomeDB" id="A0A125YZN2"/>
<dbReference type="Proteomes" id="UP000001529">
    <property type="component" value="Chromosome XII"/>
</dbReference>
<dbReference type="GO" id="GO:0005813">
    <property type="term" value="C:centrosome"/>
    <property type="evidence" value="ECO:0007669"/>
    <property type="project" value="UniProtKB-SubCell"/>
</dbReference>
<dbReference type="GO" id="GO:0005737">
    <property type="term" value="C:cytoplasm"/>
    <property type="evidence" value="ECO:0007669"/>
    <property type="project" value="UniProtKB-KW"/>
</dbReference>
<dbReference type="GO" id="GO:0016460">
    <property type="term" value="C:myosin II complex"/>
    <property type="evidence" value="ECO:0007669"/>
    <property type="project" value="TreeGrafter"/>
</dbReference>
<dbReference type="GO" id="GO:0005509">
    <property type="term" value="F:calcium ion binding"/>
    <property type="evidence" value="ECO:0000315"/>
    <property type="project" value="UniProtKB"/>
</dbReference>
<dbReference type="GO" id="GO:1903307">
    <property type="term" value="P:positive regulation of regulated secretory pathway"/>
    <property type="evidence" value="ECO:0000315"/>
    <property type="project" value="UniProtKB"/>
</dbReference>
<dbReference type="FunFam" id="1.10.238.10:FF:000527">
    <property type="entry name" value="Calmodulin-3"/>
    <property type="match status" value="1"/>
</dbReference>
<dbReference type="Gene3D" id="1.10.238.10">
    <property type="entry name" value="EF-hand"/>
    <property type="match status" value="2"/>
</dbReference>
<dbReference type="InterPro" id="IPR050230">
    <property type="entry name" value="CALM/Myosin/TropC-like"/>
</dbReference>
<dbReference type="InterPro" id="IPR011992">
    <property type="entry name" value="EF-hand-dom_pair"/>
</dbReference>
<dbReference type="InterPro" id="IPR018247">
    <property type="entry name" value="EF_Hand_1_Ca_BS"/>
</dbReference>
<dbReference type="InterPro" id="IPR002048">
    <property type="entry name" value="EF_hand_dom"/>
</dbReference>
<dbReference type="PANTHER" id="PTHR23048:SF59">
    <property type="entry name" value="EF-HAND SUPERFAMILY PROTEIN"/>
    <property type="match status" value="1"/>
</dbReference>
<dbReference type="PANTHER" id="PTHR23048">
    <property type="entry name" value="MYOSIN LIGHT CHAIN 1, 3"/>
    <property type="match status" value="1"/>
</dbReference>
<dbReference type="Pfam" id="PF13499">
    <property type="entry name" value="EF-hand_7"/>
    <property type="match status" value="2"/>
</dbReference>
<dbReference type="SMART" id="SM00054">
    <property type="entry name" value="EFh"/>
    <property type="match status" value="4"/>
</dbReference>
<dbReference type="SUPFAM" id="SSF47473">
    <property type="entry name" value="EF-hand"/>
    <property type="match status" value="1"/>
</dbReference>
<dbReference type="PROSITE" id="PS00018">
    <property type="entry name" value="EF_HAND_1"/>
    <property type="match status" value="2"/>
</dbReference>
<dbReference type="PROSITE" id="PS50222">
    <property type="entry name" value="EF_HAND_2"/>
    <property type="match status" value="4"/>
</dbReference>
<keyword id="KW-0106">Calcium</keyword>
<keyword id="KW-0963">Cytoplasm</keyword>
<keyword id="KW-0206">Cytoskeleton</keyword>
<keyword id="KW-0479">Metal-binding</keyword>
<keyword id="KW-1185">Reference proteome</keyword>
<keyword id="KW-0677">Repeat</keyword>
<name>CETN2_TOXGM</name>
<comment type="function">
    <text evidence="4 5 6">In tachyzoites, plays an essential role in microneme secretion that ensures parasite motility and attachment to, invasion of and egress from host cells (PubMed:31182647, PubMed:31206964). Also involved in the architecture of the peripheral annuli where it appears to regulate the localization of PAP2 (PubMed:31206964). In association with the myosin motor MyoJ, involved in the constriction of the basal complex at the end of daughter cell division in an actin-dependent manner; the basal complex is a cytoskeletal structure formed at the tachyzoite basal pole during daughter cell formation (PubMed:28593938). May be involved in parasite replication (PubMed:31182647).</text>
</comment>
<comment type="subunit">
    <text evidence="7">Monomer (PubMed:32759683). Does not homooligomerize (PubMed:32759683).</text>
</comment>
<comment type="subcellular location">
    <subcellularLocation>
        <location evidence="3 4 5 6">Cytoplasm</location>
        <location evidence="3 4 5 6">Cytoskeleton</location>
        <location evidence="3 4 5 6">Microtubule organizing center</location>
        <location evidence="3 4 5 6">Centrosome</location>
    </subcellularLocation>
    <text evidence="3 4 5 6">In tachyzoites, localizes to preconoidal rings, peripheral annuli, centrioles and basal complex (PubMed:18208326, PubMed:28593938, PubMed:31182647, PubMed:31206964). Recruitment to the daughter basal complex occurs at a late stage of daughter cell assembly (PubMed:18208326, PubMed:31182647).</text>
</comment>
<comment type="developmental stage">
    <text evidence="3 4 5 6">Expressed in tachyzoites.</text>
</comment>
<comment type="domain">
    <text evidence="7">EF-hand 1 domain binds Ca(2+) with low affinity (PubMed:32759683). EF-hand 2, EF-hand 3 and EF-hand 4 domains do not bind Ca(2+) (PubMed:32759683).</text>
</comment>
<comment type="similarity">
    <text evidence="12">Belongs to the centrin family.</text>
</comment>
<gene>
    <name evidence="8" type="primary">CEN2</name>
    <name evidence="14" type="ORF">TGME49_250340</name>
</gene>
<sequence>MQRGALRGASPTARRRLVDRPGLTEDEIEEIREAFNLFDTDGSGMIDPKELKAAMQSLGFETKNPTIYQMIADLDRDSGGPIDFEEFLDAITAKLGDKESREGIQKIFSLFDDDRTGTITLKNLKRVAKELGETMSEDELREMLERADSNGDGEISFEDFYAIMTKKTFP</sequence>